<protein>
    <recommendedName>
        <fullName evidence="1">Peptide chain release factor 2</fullName>
        <shortName evidence="1">RF-2</shortName>
    </recommendedName>
</protein>
<accession>B1MEU8</accession>
<proteinExistence type="inferred from homology"/>
<reference key="1">
    <citation type="journal article" date="2009" name="PLoS ONE">
        <title>Non mycobacterial virulence genes in the genome of the emerging pathogen Mycobacterium abscessus.</title>
        <authorList>
            <person name="Ripoll F."/>
            <person name="Pasek S."/>
            <person name="Schenowitz C."/>
            <person name="Dossat C."/>
            <person name="Barbe V."/>
            <person name="Rottman M."/>
            <person name="Macheras E."/>
            <person name="Heym B."/>
            <person name="Herrmann J.L."/>
            <person name="Daffe M."/>
            <person name="Brosch R."/>
            <person name="Risler J.L."/>
            <person name="Gaillard J.L."/>
        </authorList>
    </citation>
    <scope>NUCLEOTIDE SEQUENCE [LARGE SCALE GENOMIC DNA]</scope>
    <source>
        <strain>ATCC 19977 / DSM 44196 / CCUG 20993 / CIP 104536 / JCM 13569 / NCTC 13031 / TMC 1543 / L948</strain>
    </source>
</reference>
<keyword id="KW-0963">Cytoplasm</keyword>
<keyword id="KW-0488">Methylation</keyword>
<keyword id="KW-0648">Protein biosynthesis</keyword>
<keyword id="KW-1185">Reference proteome</keyword>
<gene>
    <name evidence="1" type="primary">prfB</name>
    <name type="ordered locus">MAB_3478c</name>
</gene>
<feature type="chain" id="PRO_1000093546" description="Peptide chain release factor 2">
    <location>
        <begin position="1"/>
        <end position="367"/>
    </location>
</feature>
<feature type="modified residue" description="N5-methylglutamine" evidence="1">
    <location>
        <position position="250"/>
    </location>
</feature>
<evidence type="ECO:0000255" key="1">
    <source>
        <dbReference type="HAMAP-Rule" id="MF_00094"/>
    </source>
</evidence>
<organism>
    <name type="scientific">Mycobacteroides abscessus (strain ATCC 19977 / DSM 44196 / CCUG 20993 / CIP 104536 / JCM 13569 / NCTC 13031 / TMC 1543 / L948)</name>
    <name type="common">Mycobacterium abscessus</name>
    <dbReference type="NCBI Taxonomy" id="561007"/>
    <lineage>
        <taxon>Bacteria</taxon>
        <taxon>Bacillati</taxon>
        <taxon>Actinomycetota</taxon>
        <taxon>Actinomycetes</taxon>
        <taxon>Mycobacteriales</taxon>
        <taxon>Mycobacteriaceae</taxon>
        <taxon>Mycobacteroides</taxon>
        <taxon>Mycobacteroides abscessus</taxon>
    </lineage>
</organism>
<sequence>MDLDCQADIADLDTTLTTVERVLDVDGLRARIKTLEEAAADPNLWDDQARGQQVTSQLSHAQGELRRVEELRSRLDDLPVLYELAEESEDNSVVAEADAERVKLREDIEAMEVRTLLSGEYDEREAVVTIRSGAGGVDAADWAEMLMRMYIRWAEAHKYPVEVFDTSYAEEAGIKSATFAVHAPFAYGTLSVEQGTHRLVRISPFDNQSRRQTSFADVEVLPVVETTDHIDIPEGDLRVDVYRSSGPGGQSVNTTDSAVRLTHIPTGIVVTCQNEKSQLQNKVAAMRVLQARLLERKRQEERAEMDALKGDGGSSWGTQMRSYVLQPYQMVKDLRTEYEVGNPAAVLDGDIDGFIEAGIRWRNRRDD</sequence>
<comment type="function">
    <text evidence="1">Peptide chain release factor 2 directs the termination of translation in response to the peptide chain termination codons UGA and UAA.</text>
</comment>
<comment type="subcellular location">
    <subcellularLocation>
        <location evidence="1">Cytoplasm</location>
    </subcellularLocation>
</comment>
<comment type="PTM">
    <text evidence="1">Methylated by PrmC. Methylation increases the termination efficiency of RF2.</text>
</comment>
<comment type="similarity">
    <text evidence="1">Belongs to the prokaryotic/mitochondrial release factor family.</text>
</comment>
<dbReference type="EMBL" id="CU458896">
    <property type="protein sequence ID" value="CAM63554.1"/>
    <property type="molecule type" value="Genomic_DNA"/>
</dbReference>
<dbReference type="RefSeq" id="WP_005056447.1">
    <property type="nucleotide sequence ID" value="NZ_MLCG01000001.1"/>
</dbReference>
<dbReference type="SMR" id="B1MEU8"/>
<dbReference type="GeneID" id="93380417"/>
<dbReference type="KEGG" id="mab:MAB_3478c"/>
<dbReference type="Proteomes" id="UP000007137">
    <property type="component" value="Chromosome"/>
</dbReference>
<dbReference type="GO" id="GO:0005737">
    <property type="term" value="C:cytoplasm"/>
    <property type="evidence" value="ECO:0007669"/>
    <property type="project" value="UniProtKB-SubCell"/>
</dbReference>
<dbReference type="GO" id="GO:0016149">
    <property type="term" value="F:translation release factor activity, codon specific"/>
    <property type="evidence" value="ECO:0007669"/>
    <property type="project" value="UniProtKB-UniRule"/>
</dbReference>
<dbReference type="FunFam" id="3.30.160.20:FF:000010">
    <property type="entry name" value="Peptide chain release factor 2"/>
    <property type="match status" value="1"/>
</dbReference>
<dbReference type="Gene3D" id="3.30.160.20">
    <property type="match status" value="1"/>
</dbReference>
<dbReference type="Gene3D" id="3.30.70.1660">
    <property type="match status" value="1"/>
</dbReference>
<dbReference type="Gene3D" id="1.20.58.410">
    <property type="entry name" value="Release factor"/>
    <property type="match status" value="1"/>
</dbReference>
<dbReference type="HAMAP" id="MF_00094">
    <property type="entry name" value="Rel_fac_2"/>
    <property type="match status" value="1"/>
</dbReference>
<dbReference type="InterPro" id="IPR005139">
    <property type="entry name" value="PCRF"/>
</dbReference>
<dbReference type="InterPro" id="IPR000352">
    <property type="entry name" value="Pep_chain_release_fac_I"/>
</dbReference>
<dbReference type="InterPro" id="IPR045853">
    <property type="entry name" value="Pep_chain_release_fac_I_sf"/>
</dbReference>
<dbReference type="InterPro" id="IPR004374">
    <property type="entry name" value="PrfB"/>
</dbReference>
<dbReference type="NCBIfam" id="TIGR00020">
    <property type="entry name" value="prfB"/>
    <property type="match status" value="1"/>
</dbReference>
<dbReference type="PANTHER" id="PTHR43116:SF3">
    <property type="entry name" value="CLASS I PEPTIDE CHAIN RELEASE FACTOR"/>
    <property type="match status" value="1"/>
</dbReference>
<dbReference type="PANTHER" id="PTHR43116">
    <property type="entry name" value="PEPTIDE CHAIN RELEASE FACTOR 2"/>
    <property type="match status" value="1"/>
</dbReference>
<dbReference type="Pfam" id="PF03462">
    <property type="entry name" value="PCRF"/>
    <property type="match status" value="1"/>
</dbReference>
<dbReference type="Pfam" id="PF00472">
    <property type="entry name" value="RF-1"/>
    <property type="match status" value="1"/>
</dbReference>
<dbReference type="SMART" id="SM00937">
    <property type="entry name" value="PCRF"/>
    <property type="match status" value="1"/>
</dbReference>
<dbReference type="SUPFAM" id="SSF75620">
    <property type="entry name" value="Release factor"/>
    <property type="match status" value="1"/>
</dbReference>
<dbReference type="PROSITE" id="PS00745">
    <property type="entry name" value="RF_PROK_I"/>
    <property type="match status" value="1"/>
</dbReference>
<name>RF2_MYCA9</name>